<name>Y2432_SHEON</name>
<proteinExistence type="inferred from homology"/>
<sequence length="248" mass="26795">MAGHSKWANIKHRKAAQDAKRGKLFTKFIRELTVSAREGGSDPDSNPRLRIAIDKALGGNMTRDTIERAIKRGAGELEGQQLETIIYEGYGPGGTAVMVETMTDNRNRTVSGVRNAFSKSGGNLGTDGSVAYLFTKRGVLSYAPGTDEDALMDAALEAGAEDVVSYDDGAIDVFTEPTAFYEVKDALDAAGFVSDNAEIAMIASTKAELDAETAEKFMRLIDTLEEHDDVQEVYHNAEISDEIMESLG</sequence>
<feature type="chain" id="PRO_0000175887" description="Probable transcriptional regulatory protein SO_2432">
    <location>
        <begin position="1"/>
        <end position="248"/>
    </location>
</feature>
<dbReference type="EMBL" id="AE014299">
    <property type="protein sequence ID" value="AAN55466.1"/>
    <property type="molecule type" value="Genomic_DNA"/>
</dbReference>
<dbReference type="RefSeq" id="NP_718022.1">
    <property type="nucleotide sequence ID" value="NC_004347.2"/>
</dbReference>
<dbReference type="RefSeq" id="WP_011072407.1">
    <property type="nucleotide sequence ID" value="NC_004347.2"/>
</dbReference>
<dbReference type="SMR" id="Q8EEF0"/>
<dbReference type="STRING" id="211586.SO_2432"/>
<dbReference type="PaxDb" id="211586-SO_2432"/>
<dbReference type="KEGG" id="son:SO_2432"/>
<dbReference type="PATRIC" id="fig|1028802.3.peg.1920"/>
<dbReference type="eggNOG" id="COG0217">
    <property type="taxonomic scope" value="Bacteria"/>
</dbReference>
<dbReference type="HOGENOM" id="CLU_062974_2_2_6"/>
<dbReference type="OrthoDB" id="9781053at2"/>
<dbReference type="PhylomeDB" id="Q8EEF0"/>
<dbReference type="BioCyc" id="SONE211586:G1GMP-2222-MONOMER"/>
<dbReference type="Proteomes" id="UP000008186">
    <property type="component" value="Chromosome"/>
</dbReference>
<dbReference type="GO" id="GO:0005829">
    <property type="term" value="C:cytosol"/>
    <property type="evidence" value="ECO:0000318"/>
    <property type="project" value="GO_Central"/>
</dbReference>
<dbReference type="GO" id="GO:0003677">
    <property type="term" value="F:DNA binding"/>
    <property type="evidence" value="ECO:0007669"/>
    <property type="project" value="UniProtKB-UniRule"/>
</dbReference>
<dbReference type="GO" id="GO:0006355">
    <property type="term" value="P:regulation of DNA-templated transcription"/>
    <property type="evidence" value="ECO:0007669"/>
    <property type="project" value="UniProtKB-UniRule"/>
</dbReference>
<dbReference type="FunFam" id="1.10.10.200:FF:000001">
    <property type="entry name" value="Probable transcriptional regulatory protein YebC"/>
    <property type="match status" value="1"/>
</dbReference>
<dbReference type="FunFam" id="3.30.70.980:FF:000002">
    <property type="entry name" value="Probable transcriptional regulatory protein YebC"/>
    <property type="match status" value="1"/>
</dbReference>
<dbReference type="Gene3D" id="1.10.10.200">
    <property type="match status" value="1"/>
</dbReference>
<dbReference type="Gene3D" id="3.30.70.980">
    <property type="match status" value="2"/>
</dbReference>
<dbReference type="HAMAP" id="MF_00693">
    <property type="entry name" value="Transcrip_reg_TACO1"/>
    <property type="match status" value="1"/>
</dbReference>
<dbReference type="InterPro" id="IPR017856">
    <property type="entry name" value="Integrase-like_N"/>
</dbReference>
<dbReference type="InterPro" id="IPR048300">
    <property type="entry name" value="TACO1_YebC-like_2nd/3rd_dom"/>
</dbReference>
<dbReference type="InterPro" id="IPR049083">
    <property type="entry name" value="TACO1_YebC_N"/>
</dbReference>
<dbReference type="InterPro" id="IPR002876">
    <property type="entry name" value="Transcrip_reg_TACO1-like"/>
</dbReference>
<dbReference type="InterPro" id="IPR026564">
    <property type="entry name" value="Transcrip_reg_TACO1-like_dom3"/>
</dbReference>
<dbReference type="InterPro" id="IPR029072">
    <property type="entry name" value="YebC-like"/>
</dbReference>
<dbReference type="NCBIfam" id="NF001030">
    <property type="entry name" value="PRK00110.1"/>
    <property type="match status" value="1"/>
</dbReference>
<dbReference type="NCBIfam" id="NF009044">
    <property type="entry name" value="PRK12378.1"/>
    <property type="match status" value="1"/>
</dbReference>
<dbReference type="NCBIfam" id="TIGR01033">
    <property type="entry name" value="YebC/PmpR family DNA-binding transcriptional regulator"/>
    <property type="match status" value="1"/>
</dbReference>
<dbReference type="PANTHER" id="PTHR12532:SF6">
    <property type="entry name" value="TRANSCRIPTIONAL REGULATORY PROTEIN YEBC-RELATED"/>
    <property type="match status" value="1"/>
</dbReference>
<dbReference type="PANTHER" id="PTHR12532">
    <property type="entry name" value="TRANSLATIONAL ACTIVATOR OF CYTOCHROME C OXIDASE 1"/>
    <property type="match status" value="1"/>
</dbReference>
<dbReference type="Pfam" id="PF20772">
    <property type="entry name" value="TACO1_YebC_N"/>
    <property type="match status" value="1"/>
</dbReference>
<dbReference type="Pfam" id="PF01709">
    <property type="entry name" value="Transcrip_reg"/>
    <property type="match status" value="1"/>
</dbReference>
<dbReference type="SUPFAM" id="SSF75625">
    <property type="entry name" value="YebC-like"/>
    <property type="match status" value="1"/>
</dbReference>
<accession>Q8EEF0</accession>
<protein>
    <recommendedName>
        <fullName evidence="1">Probable transcriptional regulatory protein SO_2432</fullName>
    </recommendedName>
</protein>
<comment type="subcellular location">
    <subcellularLocation>
        <location evidence="1">Cytoplasm</location>
    </subcellularLocation>
</comment>
<comment type="similarity">
    <text evidence="1">Belongs to the TACO1 family.</text>
</comment>
<gene>
    <name type="ordered locus">SO_2432</name>
</gene>
<reference key="1">
    <citation type="journal article" date="2002" name="Nat. Biotechnol.">
        <title>Genome sequence of the dissimilatory metal ion-reducing bacterium Shewanella oneidensis.</title>
        <authorList>
            <person name="Heidelberg J.F."/>
            <person name="Paulsen I.T."/>
            <person name="Nelson K.E."/>
            <person name="Gaidos E.J."/>
            <person name="Nelson W.C."/>
            <person name="Read T.D."/>
            <person name="Eisen J.A."/>
            <person name="Seshadri R."/>
            <person name="Ward N.L."/>
            <person name="Methe B.A."/>
            <person name="Clayton R.A."/>
            <person name="Meyer T."/>
            <person name="Tsapin A."/>
            <person name="Scott J."/>
            <person name="Beanan M.J."/>
            <person name="Brinkac L.M."/>
            <person name="Daugherty S.C."/>
            <person name="DeBoy R.T."/>
            <person name="Dodson R.J."/>
            <person name="Durkin A.S."/>
            <person name="Haft D.H."/>
            <person name="Kolonay J.F."/>
            <person name="Madupu R."/>
            <person name="Peterson J.D."/>
            <person name="Umayam L.A."/>
            <person name="White O."/>
            <person name="Wolf A.M."/>
            <person name="Vamathevan J.J."/>
            <person name="Weidman J.F."/>
            <person name="Impraim M."/>
            <person name="Lee K."/>
            <person name="Berry K.J."/>
            <person name="Lee C."/>
            <person name="Mueller J."/>
            <person name="Khouri H.M."/>
            <person name="Gill J."/>
            <person name="Utterback T.R."/>
            <person name="McDonald L.A."/>
            <person name="Feldblyum T.V."/>
            <person name="Smith H.O."/>
            <person name="Venter J.C."/>
            <person name="Nealson K.H."/>
            <person name="Fraser C.M."/>
        </authorList>
    </citation>
    <scope>NUCLEOTIDE SEQUENCE [LARGE SCALE GENOMIC DNA]</scope>
    <source>
        <strain>ATCC 700550 / JCM 31522 / CIP 106686 / LMG 19005 / NCIMB 14063 / MR-1</strain>
    </source>
</reference>
<evidence type="ECO:0000255" key="1">
    <source>
        <dbReference type="HAMAP-Rule" id="MF_00693"/>
    </source>
</evidence>
<organism>
    <name type="scientific">Shewanella oneidensis (strain ATCC 700550 / JCM 31522 / CIP 106686 / LMG 19005 / NCIMB 14063 / MR-1)</name>
    <dbReference type="NCBI Taxonomy" id="211586"/>
    <lineage>
        <taxon>Bacteria</taxon>
        <taxon>Pseudomonadati</taxon>
        <taxon>Pseudomonadota</taxon>
        <taxon>Gammaproteobacteria</taxon>
        <taxon>Alteromonadales</taxon>
        <taxon>Shewanellaceae</taxon>
        <taxon>Shewanella</taxon>
    </lineage>
</organism>
<keyword id="KW-0963">Cytoplasm</keyword>
<keyword id="KW-0238">DNA-binding</keyword>
<keyword id="KW-1185">Reference proteome</keyword>
<keyword id="KW-0804">Transcription</keyword>
<keyword id="KW-0805">Transcription regulation</keyword>